<protein>
    <recommendedName>
        <fullName>Retinaldehyde-binding protein 1</fullName>
    </recommendedName>
    <alternativeName>
        <fullName>Cellular retinaldehyde-binding protein</fullName>
    </alternativeName>
</protein>
<sequence length="317" mass="36474">MSEGVGTFRMVPEEEQELRAQLEQLTTKDHGPVFGPCSQLPRHTLQKAKDELNEREETREEAVRELQEMVQAQAASGEELAVAVAERVQEKDSGFFLRFIRARKFNVGRAYELLRGYVNFRLQYPELFDSLSPEAVRCTIEAGYPGVLSSRDKYGRVVMLFNIENWQSQEITFDEILQAYCFILEKLLENEETQINGFCIIENFKGFTMQQAASLRTSDLRKMVDMLQDSFPARFKAIHFIHQPWYFTTTYNVVKPFLKSKLLERVFVHGDDLSGFYQEIDENILPSDFGGTLPKYDGKAVAEQLFGPQAQAENTAF</sequence>
<keyword id="KW-0002">3D-structure</keyword>
<keyword id="KW-0007">Acetylation</keyword>
<keyword id="KW-0963">Cytoplasm</keyword>
<keyword id="KW-0225">Disease variant</keyword>
<keyword id="KW-1267">Proteomics identification</keyword>
<keyword id="KW-1185">Reference proteome</keyword>
<keyword id="KW-0683">Retinol-binding</keyword>
<keyword id="KW-0716">Sensory transduction</keyword>
<keyword id="KW-0813">Transport</keyword>
<keyword id="KW-0844">Vision</keyword>
<evidence type="ECO:0000250" key="1">
    <source>
        <dbReference type="UniProtKB" id="E1C1U1"/>
    </source>
</evidence>
<evidence type="ECO:0000250" key="2">
    <source>
        <dbReference type="UniProtKB" id="P10123"/>
    </source>
</evidence>
<evidence type="ECO:0000255" key="3">
    <source>
        <dbReference type="PROSITE-ProRule" id="PRU00056"/>
    </source>
</evidence>
<evidence type="ECO:0000269" key="4">
    <source>
    </source>
</evidence>
<evidence type="ECO:0000269" key="5">
    <source>
    </source>
</evidence>
<evidence type="ECO:0000269" key="6">
    <source>
    </source>
</evidence>
<evidence type="ECO:0000269" key="7">
    <source>
    </source>
</evidence>
<evidence type="ECO:0000269" key="8">
    <source>
    </source>
</evidence>
<evidence type="ECO:0000269" key="9">
    <source>
    </source>
</evidence>
<evidence type="ECO:0007829" key="10">
    <source>
        <dbReference type="PDB" id="3HX3"/>
    </source>
</evidence>
<evidence type="ECO:0007829" key="11">
    <source>
        <dbReference type="PDB" id="3HY5"/>
    </source>
</evidence>
<feature type="initiator methionine" description="Removed" evidence="2">
    <location>
        <position position="1"/>
    </location>
</feature>
<feature type="chain" id="PRO_0000079330" description="Retinaldehyde-binding protein 1">
    <location>
        <begin position="2"/>
        <end position="317"/>
    </location>
</feature>
<feature type="domain" description="CRAL-TRIO" evidence="3">
    <location>
        <begin position="136"/>
        <end position="297"/>
    </location>
</feature>
<feature type="binding site" evidence="8">
    <location>
        <position position="180"/>
    </location>
    <ligand>
        <name>11-cis-retinal</name>
        <dbReference type="ChEBI" id="CHEBI:16066"/>
    </ligand>
</feature>
<feature type="binding site" evidence="8">
    <location>
        <position position="202"/>
    </location>
    <ligand>
        <name>11-cis-retinal</name>
        <dbReference type="ChEBI" id="CHEBI:16066"/>
    </ligand>
</feature>
<feature type="modified residue" description="N-acetylserine" evidence="2">
    <location>
        <position position="2"/>
    </location>
</feature>
<feature type="sequence variant" id="VAR_005140" description="In RPA; loss of ability to bind 11-cis-retinaldehyde; dbSNP:rs137853290." evidence="6 9">
    <original>R</original>
    <variation>Q</variation>
    <location>
        <position position="151"/>
    </location>
</feature>
<feature type="sequence variant" id="VAR_037317" description="In RPA; dbSNP:rs137853291." evidence="5">
    <original>M</original>
    <variation>K</variation>
    <location>
        <position position="226"/>
    </location>
</feature>
<feature type="sequence variant" id="VAR_015172" description="In BRD; dbSNP:rs28933990." evidence="4">
    <original>R</original>
    <variation>W</variation>
    <location>
        <position position="234"/>
    </location>
</feature>
<feature type="helix" evidence="11">
    <location>
        <begin position="27"/>
        <end position="29"/>
    </location>
</feature>
<feature type="strand" evidence="11">
    <location>
        <begin position="33"/>
        <end position="35"/>
    </location>
</feature>
<feature type="turn" evidence="11">
    <location>
        <begin position="41"/>
        <end position="43"/>
    </location>
</feature>
<feature type="helix" evidence="11">
    <location>
        <begin position="44"/>
        <end position="49"/>
    </location>
</feature>
<feature type="turn" evidence="11">
    <location>
        <begin position="50"/>
        <end position="52"/>
    </location>
</feature>
<feature type="turn" evidence="11">
    <location>
        <begin position="55"/>
        <end position="57"/>
    </location>
</feature>
<feature type="helix" evidence="10">
    <location>
        <begin position="58"/>
        <end position="74"/>
    </location>
</feature>
<feature type="turn" evidence="10">
    <location>
        <begin position="75"/>
        <end position="77"/>
    </location>
</feature>
<feature type="helix" evidence="10">
    <location>
        <begin position="79"/>
        <end position="87"/>
    </location>
</feature>
<feature type="turn" evidence="10">
    <location>
        <begin position="88"/>
        <end position="90"/>
    </location>
</feature>
<feature type="helix" evidence="10">
    <location>
        <begin position="93"/>
        <end position="102"/>
    </location>
</feature>
<feature type="turn" evidence="10">
    <location>
        <begin position="103"/>
        <end position="105"/>
    </location>
</feature>
<feature type="helix" evidence="10">
    <location>
        <begin position="107"/>
        <end position="123"/>
    </location>
</feature>
<feature type="helix" evidence="10">
    <location>
        <begin position="125"/>
        <end position="127"/>
    </location>
</feature>
<feature type="turn" evidence="10">
    <location>
        <begin position="128"/>
        <end position="130"/>
    </location>
</feature>
<feature type="helix" evidence="10">
    <location>
        <begin position="133"/>
        <end position="141"/>
    </location>
</feature>
<feature type="strand" evidence="10">
    <location>
        <begin position="144"/>
        <end position="147"/>
    </location>
</feature>
<feature type="strand" evidence="10">
    <location>
        <begin position="157"/>
        <end position="162"/>
    </location>
</feature>
<feature type="turn" evidence="10">
    <location>
        <begin position="168"/>
        <end position="170"/>
    </location>
</feature>
<feature type="helix" evidence="10">
    <location>
        <begin position="173"/>
        <end position="187"/>
    </location>
</feature>
<feature type="helix" evidence="10">
    <location>
        <begin position="191"/>
        <end position="196"/>
    </location>
</feature>
<feature type="strand" evidence="10">
    <location>
        <begin position="198"/>
        <end position="203"/>
    </location>
</feature>
<feature type="helix" evidence="10">
    <location>
        <begin position="209"/>
        <end position="214"/>
    </location>
</feature>
<feature type="helix" evidence="10">
    <location>
        <begin position="217"/>
        <end position="228"/>
    </location>
</feature>
<feature type="turn" evidence="10">
    <location>
        <begin position="232"/>
        <end position="234"/>
    </location>
</feature>
<feature type="strand" evidence="10">
    <location>
        <begin position="235"/>
        <end position="242"/>
    </location>
</feature>
<feature type="helix" evidence="10">
    <location>
        <begin position="247"/>
        <end position="254"/>
    </location>
</feature>
<feature type="helix" evidence="10">
    <location>
        <begin position="255"/>
        <end position="257"/>
    </location>
</feature>
<feature type="helix" evidence="10">
    <location>
        <begin position="260"/>
        <end position="263"/>
    </location>
</feature>
<feature type="strand" evidence="10">
    <location>
        <begin position="266"/>
        <end position="270"/>
    </location>
</feature>
<feature type="helix" evidence="10">
    <location>
        <begin position="274"/>
        <end position="279"/>
    </location>
</feature>
<feature type="helix" evidence="10">
    <location>
        <begin position="282"/>
        <end position="284"/>
    </location>
</feature>
<feature type="helix" evidence="10">
    <location>
        <begin position="287"/>
        <end position="289"/>
    </location>
</feature>
<feature type="strand" evidence="10">
    <location>
        <begin position="291"/>
        <end position="293"/>
    </location>
</feature>
<feature type="helix" evidence="10">
    <location>
        <begin position="299"/>
        <end position="305"/>
    </location>
</feature>
<accession>P12271</accession>
<accession>B2R667</accession>
<reference key="1">
    <citation type="journal article" date="1988" name="J. Biol. Chem.">
        <title>Cloning of the cDNAs encoding the cellular retinaldehyde-binding protein from bovine and human retina and comparison of the protein structures.</title>
        <authorList>
            <person name="Crabb J.W."/>
            <person name="Goldflam S."/>
            <person name="Harris S.E."/>
            <person name="Saari J.C."/>
        </authorList>
    </citation>
    <scope>NUCLEOTIDE SEQUENCE [MRNA]</scope>
</reference>
<reference key="2">
    <citation type="journal article" date="1994" name="J. Biol. Chem.">
        <title>Molecular cloning and structural analysis of the human gene encoding cellular retinaldehyde-binding protein.</title>
        <authorList>
            <person name="Intres R."/>
            <person name="Goldflam S."/>
            <person name="Cook J.R."/>
            <person name="Crabb J.W."/>
        </authorList>
    </citation>
    <scope>NUCLEOTIDE SEQUENCE [GENOMIC DNA]</scope>
</reference>
<reference key="3">
    <citation type="journal article" date="2004" name="Nat. Genet.">
        <title>Complete sequencing and characterization of 21,243 full-length human cDNAs.</title>
        <authorList>
            <person name="Ota T."/>
            <person name="Suzuki Y."/>
            <person name="Nishikawa T."/>
            <person name="Otsuki T."/>
            <person name="Sugiyama T."/>
            <person name="Irie R."/>
            <person name="Wakamatsu A."/>
            <person name="Hayashi K."/>
            <person name="Sato H."/>
            <person name="Nagai K."/>
            <person name="Kimura K."/>
            <person name="Makita H."/>
            <person name="Sekine M."/>
            <person name="Obayashi M."/>
            <person name="Nishi T."/>
            <person name="Shibahara T."/>
            <person name="Tanaka T."/>
            <person name="Ishii S."/>
            <person name="Yamamoto J."/>
            <person name="Saito K."/>
            <person name="Kawai Y."/>
            <person name="Isono Y."/>
            <person name="Nakamura Y."/>
            <person name="Nagahari K."/>
            <person name="Murakami K."/>
            <person name="Yasuda T."/>
            <person name="Iwayanagi T."/>
            <person name="Wagatsuma M."/>
            <person name="Shiratori A."/>
            <person name="Sudo H."/>
            <person name="Hosoiri T."/>
            <person name="Kaku Y."/>
            <person name="Kodaira H."/>
            <person name="Kondo H."/>
            <person name="Sugawara M."/>
            <person name="Takahashi M."/>
            <person name="Kanda K."/>
            <person name="Yokoi T."/>
            <person name="Furuya T."/>
            <person name="Kikkawa E."/>
            <person name="Omura Y."/>
            <person name="Abe K."/>
            <person name="Kamihara K."/>
            <person name="Katsuta N."/>
            <person name="Sato K."/>
            <person name="Tanikawa M."/>
            <person name="Yamazaki M."/>
            <person name="Ninomiya K."/>
            <person name="Ishibashi T."/>
            <person name="Yamashita H."/>
            <person name="Murakawa K."/>
            <person name="Fujimori K."/>
            <person name="Tanai H."/>
            <person name="Kimata M."/>
            <person name="Watanabe M."/>
            <person name="Hiraoka S."/>
            <person name="Chiba Y."/>
            <person name="Ishida S."/>
            <person name="Ono Y."/>
            <person name="Takiguchi S."/>
            <person name="Watanabe S."/>
            <person name="Yosida M."/>
            <person name="Hotuta T."/>
            <person name="Kusano J."/>
            <person name="Kanehori K."/>
            <person name="Takahashi-Fujii A."/>
            <person name="Hara H."/>
            <person name="Tanase T.-O."/>
            <person name="Nomura Y."/>
            <person name="Togiya S."/>
            <person name="Komai F."/>
            <person name="Hara R."/>
            <person name="Takeuchi K."/>
            <person name="Arita M."/>
            <person name="Imose N."/>
            <person name="Musashino K."/>
            <person name="Yuuki H."/>
            <person name="Oshima A."/>
            <person name="Sasaki N."/>
            <person name="Aotsuka S."/>
            <person name="Yoshikawa Y."/>
            <person name="Matsunawa H."/>
            <person name="Ichihara T."/>
            <person name="Shiohata N."/>
            <person name="Sano S."/>
            <person name="Moriya S."/>
            <person name="Momiyama H."/>
            <person name="Satoh N."/>
            <person name="Takami S."/>
            <person name="Terashima Y."/>
            <person name="Suzuki O."/>
            <person name="Nakagawa S."/>
            <person name="Senoh A."/>
            <person name="Mizoguchi H."/>
            <person name="Goto Y."/>
            <person name="Shimizu F."/>
            <person name="Wakebe H."/>
            <person name="Hishigaki H."/>
            <person name="Watanabe T."/>
            <person name="Sugiyama A."/>
            <person name="Takemoto M."/>
            <person name="Kawakami B."/>
            <person name="Yamazaki M."/>
            <person name="Watanabe K."/>
            <person name="Kumagai A."/>
            <person name="Itakura S."/>
            <person name="Fukuzumi Y."/>
            <person name="Fujimori Y."/>
            <person name="Komiyama M."/>
            <person name="Tashiro H."/>
            <person name="Tanigami A."/>
            <person name="Fujiwara T."/>
            <person name="Ono T."/>
            <person name="Yamada K."/>
            <person name="Fujii Y."/>
            <person name="Ozaki K."/>
            <person name="Hirao M."/>
            <person name="Ohmori Y."/>
            <person name="Kawabata A."/>
            <person name="Hikiji T."/>
            <person name="Kobatake N."/>
            <person name="Inagaki H."/>
            <person name="Ikema Y."/>
            <person name="Okamoto S."/>
            <person name="Okitani R."/>
            <person name="Kawakami T."/>
            <person name="Noguchi S."/>
            <person name="Itoh T."/>
            <person name="Shigeta K."/>
            <person name="Senba T."/>
            <person name="Matsumura K."/>
            <person name="Nakajima Y."/>
            <person name="Mizuno T."/>
            <person name="Morinaga M."/>
            <person name="Sasaki M."/>
            <person name="Togashi T."/>
            <person name="Oyama M."/>
            <person name="Hata H."/>
            <person name="Watanabe M."/>
            <person name="Komatsu T."/>
            <person name="Mizushima-Sugano J."/>
            <person name="Satoh T."/>
            <person name="Shirai Y."/>
            <person name="Takahashi Y."/>
            <person name="Nakagawa K."/>
            <person name="Okumura K."/>
            <person name="Nagase T."/>
            <person name="Nomura N."/>
            <person name="Kikuchi H."/>
            <person name="Masuho Y."/>
            <person name="Yamashita R."/>
            <person name="Nakai K."/>
            <person name="Yada T."/>
            <person name="Nakamura Y."/>
            <person name="Ohara O."/>
            <person name="Isogai T."/>
            <person name="Sugano S."/>
        </authorList>
    </citation>
    <scope>NUCLEOTIDE SEQUENCE [LARGE SCALE MRNA]</scope>
    <source>
        <tissue>Caudate nucleus</tissue>
    </source>
</reference>
<reference key="4">
    <citation type="submission" date="2005-07" db="EMBL/GenBank/DDBJ databases">
        <authorList>
            <person name="Mural R.J."/>
            <person name="Istrail S."/>
            <person name="Sutton G.G."/>
            <person name="Florea L."/>
            <person name="Halpern A.L."/>
            <person name="Mobarry C.M."/>
            <person name="Lippert R."/>
            <person name="Walenz B."/>
            <person name="Shatkay H."/>
            <person name="Dew I."/>
            <person name="Miller J.R."/>
            <person name="Flanigan M.J."/>
            <person name="Edwards N.J."/>
            <person name="Bolanos R."/>
            <person name="Fasulo D."/>
            <person name="Halldorsson B.V."/>
            <person name="Hannenhalli S."/>
            <person name="Turner R."/>
            <person name="Yooseph S."/>
            <person name="Lu F."/>
            <person name="Nusskern D.R."/>
            <person name="Shue B.C."/>
            <person name="Zheng X.H."/>
            <person name="Zhong F."/>
            <person name="Delcher A.L."/>
            <person name="Huson D.H."/>
            <person name="Kravitz S.A."/>
            <person name="Mouchard L."/>
            <person name="Reinert K."/>
            <person name="Remington K.A."/>
            <person name="Clark A.G."/>
            <person name="Waterman M.S."/>
            <person name="Eichler E.E."/>
            <person name="Adams M.D."/>
            <person name="Hunkapiller M.W."/>
            <person name="Myers E.W."/>
            <person name="Venter J.C."/>
        </authorList>
    </citation>
    <scope>NUCLEOTIDE SEQUENCE [LARGE SCALE GENOMIC DNA]</scope>
</reference>
<reference key="5">
    <citation type="journal article" date="2004" name="Genome Res.">
        <title>The status, quality, and expansion of the NIH full-length cDNA project: the Mammalian Gene Collection (MGC).</title>
        <authorList>
            <consortium name="The MGC Project Team"/>
        </authorList>
    </citation>
    <scope>NUCLEOTIDE SEQUENCE [LARGE SCALE MRNA]</scope>
    <source>
        <tissue>Uterus</tissue>
    </source>
</reference>
<reference key="6">
    <citation type="journal article" date="1998" name="Protein Sci.">
        <title>Structural and functional characterization of recombinant human cellular retinaldehyde-binding protein.</title>
        <authorList>
            <person name="Crabb J.W."/>
            <person name="Carlson A."/>
            <person name="Hen Y."/>
            <person name="Goldflam S."/>
            <person name="Intres R."/>
            <person name="West K.A."/>
            <person name="Hulmes J.D."/>
            <person name="Kapron J.T."/>
            <person name="Luck L.A."/>
            <person name="Horwitz J."/>
            <person name="Bok D."/>
        </authorList>
    </citation>
    <scope>CHARACTERIZATION</scope>
</reference>
<reference key="7">
    <citation type="journal article" date="2002" name="Am. J. Hum. Genet.">
        <title>Newfoundland rod-cone dystrophy, an early-onset retinal dystrophy, is caused by splice-junction mutations in RLBP1.</title>
        <authorList>
            <person name="Eichers E.R."/>
            <person name="Green J.S."/>
            <person name="Stockton D.W."/>
            <person name="Jackman C.S."/>
            <person name="Whelan J."/>
            <person name="McNamara J.A."/>
            <person name="Johnson G.J."/>
            <person name="Lupski J.R."/>
            <person name="Katsanis N."/>
        </authorList>
    </citation>
    <scope>INVOLVEMENT IN NFRCD</scope>
</reference>
<reference key="8">
    <citation type="journal article" date="2009" name="Proc. Natl. Acad. Sci. U.S.A.">
        <title>Bothnia dystrophy is caused by domino-like rearrangements in cellular retinaldehyde-binding protein mutant R234W.</title>
        <authorList>
            <person name="He X."/>
            <person name="Lobsiger J."/>
            <person name="Stocker A."/>
        </authorList>
    </citation>
    <scope>X-RAY CRYSTALLOGRAPHY (1.69 ANGSTROMS) OF 2-317 OF WILD-TYPE AND MUTANT TRP-234 IN COMPLEX WITH 11-CIS-RETINAL</scope>
    <scope>FUNCTION</scope>
    <scope>TISSUE SPECIFICITY</scope>
    <scope>RETINAL-BINDING SITES</scope>
</reference>
<reference key="9">
    <citation type="journal article" date="1997" name="Nat. Genet.">
        <title>Mutation of the gene encoding cellular retinaldehyde-binding protein in autosomal recessive retinitis pigmentosa.</title>
        <authorList>
            <person name="Maw M.A."/>
            <person name="Kennedy B."/>
            <person name="Knight A."/>
            <person name="Bridges R."/>
            <person name="Roth K.E."/>
            <person name="Mani E.J."/>
            <person name="Mukkadan J.K."/>
            <person name="Nancarrow D."/>
            <person name="Crabb J.W."/>
            <person name="Denton M.J."/>
        </authorList>
    </citation>
    <scope>VARIANT RPA GLN-151</scope>
</reference>
<reference key="10">
    <citation type="journal article" date="1999" name="Invest. Ophthalmol. Vis. Sci.">
        <title>Bothnia dystrophy caused by mutations in the cellular retinaldehyde-binding protein gene (RLBP1) on chromosome 15q26.</title>
        <authorList>
            <person name="Burstedt M.S."/>
            <person name="Sandgren O."/>
            <person name="Holmgren G."/>
            <person name="Forsman-Semb K."/>
        </authorList>
    </citation>
    <scope>VARIANT BRD TRP-234</scope>
</reference>
<reference key="11">
    <citation type="journal article" date="1999" name="Invest. Ophthalmol. Vis. Sci.">
        <title>Recessive mutations in the RLBP1 gene encoding cellular retinaldehyde-binding protein in a form of retinitis punctata albescens.</title>
        <authorList>
            <person name="Morimura H."/>
            <person name="Berson E.L."/>
            <person name="Dryja T.P."/>
        </authorList>
    </citation>
    <scope>INVOLVEMENT IN RPA</scope>
    <scope>VARIANT RPA LYS-226</scope>
</reference>
<reference key="12">
    <citation type="journal article" date="2001" name="Clin. Genet.">
        <title>Fundus albipunctatus and retinitis punctata albescens in a pedigree with an R150Q mutation in RLBP1.</title>
        <authorList>
            <person name="Katsanis N."/>
            <person name="Shroyer N.F."/>
            <person name="Lewis R.A."/>
            <person name="Cavender J.C."/>
            <person name="Al-Rajhi A.A."/>
            <person name="Jabak M."/>
            <person name="Lupski J.R."/>
        </authorList>
    </citation>
    <scope>VARIANT RPA GLN-151</scope>
</reference>
<comment type="function">
    <text evidence="8">Soluble retinoid carrier essential the proper function of both rod and cone photoreceptors. Participates in the regeneration of active 11-cis-retinol and 11-cis-retinaldehyde, from the inactive 11-trans products of the rhodopsin photocycle and in the de novo synthesis of these retinoids from 11-trans metabolic precursors. The cycling of retinoids between photoreceptor and adjacent pigment epithelium cells is known as the 'visual cycle'.</text>
</comment>
<comment type="subunit">
    <text evidence="1">Interacts with DEGS1; the interaction increases synthesis of chromophore-precursors by DEGS1.</text>
</comment>
<comment type="interaction">
    <interactant intactId="EBI-11959637">
        <id>P12271</id>
    </interactant>
    <interactant intactId="EBI-11959635">
        <id>Q9P2G9-2</id>
        <label>KLHL8</label>
    </interactant>
    <organismsDiffer>false</organismsDiffer>
    <experiments>3</experiments>
</comment>
<comment type="subcellular location">
    <subcellularLocation>
        <location>Cytoplasm</location>
    </subcellularLocation>
</comment>
<comment type="tissue specificity">
    <text evidence="8">Retina and pineal gland. Not present in photoreceptor cells but is expressed abundantly in the adjacent retinal pigment epithelium (RPE) and in the Mueller glial cells of the retina.</text>
</comment>
<comment type="disease" evidence="4">
    <disease id="DI-00193">
        <name>Bothnia retinal dystrophy</name>
        <acronym>BRD</acronym>
        <description>A type of retinitis punctata albescens. Affected individuals show night blindness from early childhood with features consistent with retinitis punctata albescens and macular degeneration.</description>
        <dbReference type="MIM" id="607475"/>
    </disease>
    <text>The disease is caused by variants affecting the gene represented in this entry.</text>
</comment>
<comment type="disease" evidence="7">
    <disease id="DI-01005">
        <name>Rod-cone dystrophy Newfoundland</name>
        <acronym>NFRCD</acronym>
        <description>A rod-cone dystrophy reminiscent of retinitis punctata albescens but with a substantially lower age at onset and more-rapid and distinctive progression. Rod-cone dystrophies results from initial loss of rod photoreceptors, later followed by cone photoreceptors loss.</description>
        <dbReference type="MIM" id="607476"/>
    </disease>
    <text>The disease is caused by variants affecting the gene represented in this entry.</text>
</comment>
<comment type="disease" evidence="5 6 9">
    <disease id="DI-01639">
        <name>Retinitis punctata albescens</name>
        <acronym>RPA</acronym>
        <description>A form of fleck retina disease characterized by aggregation of white flecks posteriorly in the retina, causing night blindness and delayed dark adaptation. It differs from fundus albipunctatus in being progressive and evolving to generalized atrophy of the retina.</description>
        <dbReference type="MIM" id="136880"/>
    </disease>
    <text>The disease is caused by variants affecting the gene represented in this entry.</text>
</comment>
<dbReference type="EMBL" id="J04213">
    <property type="protein sequence ID" value="AAA60251.1"/>
    <property type="molecule type" value="mRNA"/>
</dbReference>
<dbReference type="EMBL" id="L34219">
    <property type="protein sequence ID" value="AAA65123.1"/>
    <property type="molecule type" value="Genomic_DNA"/>
</dbReference>
<dbReference type="EMBL" id="AK312457">
    <property type="protein sequence ID" value="BAG35364.1"/>
    <property type="molecule type" value="mRNA"/>
</dbReference>
<dbReference type="EMBL" id="CH471101">
    <property type="protein sequence ID" value="EAX02038.1"/>
    <property type="molecule type" value="Genomic_DNA"/>
</dbReference>
<dbReference type="EMBL" id="BC004199">
    <property type="protein sequence ID" value="AAH04199.1"/>
    <property type="molecule type" value="mRNA"/>
</dbReference>
<dbReference type="CCDS" id="CCDS32324.1"/>
<dbReference type="PIR" id="B31955">
    <property type="entry name" value="B31955"/>
</dbReference>
<dbReference type="RefSeq" id="NP_000317.1">
    <property type="nucleotide sequence ID" value="NM_000326.5"/>
</dbReference>
<dbReference type="RefSeq" id="XP_011520172.1">
    <property type="nucleotide sequence ID" value="XM_011521870.3"/>
</dbReference>
<dbReference type="RefSeq" id="XP_047288883.1">
    <property type="nucleotide sequence ID" value="XM_047432927.1"/>
</dbReference>
<dbReference type="RefSeq" id="XP_054234553.1">
    <property type="nucleotide sequence ID" value="XM_054378578.1"/>
</dbReference>
<dbReference type="PDB" id="3HX3">
    <property type="method" value="X-ray"/>
    <property type="resolution" value="1.69 A"/>
    <property type="chains" value="A=2-317"/>
</dbReference>
<dbReference type="PDB" id="3HY5">
    <property type="method" value="X-ray"/>
    <property type="resolution" value="3.04 A"/>
    <property type="chains" value="A=2-317"/>
</dbReference>
<dbReference type="PDB" id="4CIZ">
    <property type="method" value="X-ray"/>
    <property type="resolution" value="3.40 A"/>
    <property type="chains" value="A=1-317"/>
</dbReference>
<dbReference type="PDB" id="4CJ6">
    <property type="method" value="X-ray"/>
    <property type="resolution" value="1.90 A"/>
    <property type="chains" value="A=1-317"/>
</dbReference>
<dbReference type="PDBsum" id="3HX3"/>
<dbReference type="PDBsum" id="3HY5"/>
<dbReference type="PDBsum" id="4CIZ"/>
<dbReference type="PDBsum" id="4CJ6"/>
<dbReference type="SMR" id="P12271"/>
<dbReference type="BioGRID" id="111949">
    <property type="interactions" value="7"/>
</dbReference>
<dbReference type="FunCoup" id="P12271">
    <property type="interactions" value="23"/>
</dbReference>
<dbReference type="IntAct" id="P12271">
    <property type="interactions" value="5"/>
</dbReference>
<dbReference type="STRING" id="9606.ENSP00000268125"/>
<dbReference type="BindingDB" id="P12271"/>
<dbReference type="DrugBank" id="DB00162">
    <property type="generic name" value="Vitamin A"/>
</dbReference>
<dbReference type="DrugCentral" id="P12271"/>
<dbReference type="GlyGen" id="P12271">
    <property type="glycosylation" value="1 site, 1 O-linked glycan (1 site)"/>
</dbReference>
<dbReference type="iPTMnet" id="P12271"/>
<dbReference type="PhosphoSitePlus" id="P12271"/>
<dbReference type="BioMuta" id="RLBP1"/>
<dbReference type="DMDM" id="117391"/>
<dbReference type="jPOST" id="P12271"/>
<dbReference type="MassIVE" id="P12271"/>
<dbReference type="PaxDb" id="9606-ENSP00000268125"/>
<dbReference type="PeptideAtlas" id="P12271"/>
<dbReference type="ProteomicsDB" id="52841"/>
<dbReference type="Antibodypedia" id="15709">
    <property type="antibodies" value="282 antibodies from 28 providers"/>
</dbReference>
<dbReference type="DNASU" id="6017"/>
<dbReference type="Ensembl" id="ENST00000268125.10">
    <property type="protein sequence ID" value="ENSP00000268125.5"/>
    <property type="gene ID" value="ENSG00000140522.12"/>
</dbReference>
<dbReference type="GeneID" id="6017"/>
<dbReference type="KEGG" id="hsa:6017"/>
<dbReference type="MANE-Select" id="ENST00000268125.10">
    <property type="protein sequence ID" value="ENSP00000268125.5"/>
    <property type="RefSeq nucleotide sequence ID" value="NM_000326.5"/>
    <property type="RefSeq protein sequence ID" value="NP_000317.1"/>
</dbReference>
<dbReference type="UCSC" id="uc002bnl.4">
    <property type="organism name" value="human"/>
</dbReference>
<dbReference type="AGR" id="HGNC:10024"/>
<dbReference type="CTD" id="6017"/>
<dbReference type="DisGeNET" id="6017"/>
<dbReference type="GeneCards" id="RLBP1"/>
<dbReference type="GeneReviews" id="RLBP1"/>
<dbReference type="HGNC" id="HGNC:10024">
    <property type="gene designation" value="RLBP1"/>
</dbReference>
<dbReference type="HPA" id="ENSG00000140522">
    <property type="expression patterns" value="Tissue enriched (retina)"/>
</dbReference>
<dbReference type="MalaCards" id="RLBP1"/>
<dbReference type="MIM" id="136880">
    <property type="type" value="phenotype"/>
</dbReference>
<dbReference type="MIM" id="180090">
    <property type="type" value="gene"/>
</dbReference>
<dbReference type="MIM" id="607475">
    <property type="type" value="phenotype"/>
</dbReference>
<dbReference type="MIM" id="607476">
    <property type="type" value="phenotype"/>
</dbReference>
<dbReference type="neXtProt" id="NX_P12271"/>
<dbReference type="OpenTargets" id="ENSG00000140522"/>
<dbReference type="Orphanet" id="85128">
    <property type="disease" value="Bothnia retinal dystrophy"/>
</dbReference>
<dbReference type="Orphanet" id="227796">
    <property type="disease" value="Fundus albipunctatus"/>
</dbReference>
<dbReference type="Orphanet" id="791">
    <property type="disease" value="Retinitis pigmentosa"/>
</dbReference>
<dbReference type="Orphanet" id="52427">
    <property type="disease" value="Retinitis punctata albescens"/>
</dbReference>
<dbReference type="PharmGKB" id="PA34397"/>
<dbReference type="VEuPathDB" id="HostDB:ENSG00000140522"/>
<dbReference type="eggNOG" id="KOG1471">
    <property type="taxonomic scope" value="Eukaryota"/>
</dbReference>
<dbReference type="GeneTree" id="ENSGT00940000160026"/>
<dbReference type="HOGENOM" id="CLU_046597_4_0_1"/>
<dbReference type="InParanoid" id="P12271"/>
<dbReference type="OMA" id="IETCTLI"/>
<dbReference type="OrthoDB" id="75724at2759"/>
<dbReference type="PAN-GO" id="P12271">
    <property type="GO annotations" value="1 GO annotation based on evolutionary models"/>
</dbReference>
<dbReference type="PhylomeDB" id="P12271"/>
<dbReference type="BioCyc" id="MetaCyc:ENSG00000140522-MONOMER"/>
<dbReference type="PathwayCommons" id="P12271"/>
<dbReference type="Reactome" id="R-HSA-2187335">
    <property type="pathway name" value="The retinoid cycle in cones (daylight vision)"/>
</dbReference>
<dbReference type="Reactome" id="R-HSA-2453902">
    <property type="pathway name" value="The canonical retinoid cycle in rods (twilight vision)"/>
</dbReference>
<dbReference type="Reactome" id="R-HSA-9918438">
    <property type="pathway name" value="Defective visual phototransduction due to RDH5 loss of function"/>
</dbReference>
<dbReference type="SignaLink" id="P12271"/>
<dbReference type="BioGRID-ORCS" id="6017">
    <property type="hits" value="13 hits in 1146 CRISPR screens"/>
</dbReference>
<dbReference type="ChiTaRS" id="RLBP1">
    <property type="organism name" value="human"/>
</dbReference>
<dbReference type="EvolutionaryTrace" id="P12271"/>
<dbReference type="GeneWiki" id="Retinaldehyde-binding_protein_1"/>
<dbReference type="GenomeRNAi" id="6017"/>
<dbReference type="Pharos" id="P12271">
    <property type="development level" value="Tbio"/>
</dbReference>
<dbReference type="PRO" id="PR:P12271"/>
<dbReference type="Proteomes" id="UP000005640">
    <property type="component" value="Chromosome 15"/>
</dbReference>
<dbReference type="RNAct" id="P12271">
    <property type="molecule type" value="protein"/>
</dbReference>
<dbReference type="Bgee" id="ENSG00000140522">
    <property type="expression patterns" value="Expressed in pigmented layer of retina and 95 other cell types or tissues"/>
</dbReference>
<dbReference type="ExpressionAtlas" id="P12271">
    <property type="expression patterns" value="baseline and differential"/>
</dbReference>
<dbReference type="GO" id="GO:0044297">
    <property type="term" value="C:cell body"/>
    <property type="evidence" value="ECO:0007669"/>
    <property type="project" value="Ensembl"/>
</dbReference>
<dbReference type="GO" id="GO:0005813">
    <property type="term" value="C:centrosome"/>
    <property type="evidence" value="ECO:0000314"/>
    <property type="project" value="HPA"/>
</dbReference>
<dbReference type="GO" id="GO:0005829">
    <property type="term" value="C:cytosol"/>
    <property type="evidence" value="ECO:0000314"/>
    <property type="project" value="HPA"/>
</dbReference>
<dbReference type="GO" id="GO:0005654">
    <property type="term" value="C:nucleoplasm"/>
    <property type="evidence" value="ECO:0000314"/>
    <property type="project" value="HPA"/>
</dbReference>
<dbReference type="GO" id="GO:0005502">
    <property type="term" value="F:11-cis retinal binding"/>
    <property type="evidence" value="ECO:0007669"/>
    <property type="project" value="Ensembl"/>
</dbReference>
<dbReference type="GO" id="GO:1902936">
    <property type="term" value="F:phosphatidylinositol bisphosphate binding"/>
    <property type="evidence" value="ECO:0000318"/>
    <property type="project" value="GO_Central"/>
</dbReference>
<dbReference type="GO" id="GO:0019841">
    <property type="term" value="F:retinol binding"/>
    <property type="evidence" value="ECO:0007669"/>
    <property type="project" value="UniProtKB-KW"/>
</dbReference>
<dbReference type="GO" id="GO:0007601">
    <property type="term" value="P:visual perception"/>
    <property type="evidence" value="ECO:0000304"/>
    <property type="project" value="ProtInc"/>
</dbReference>
<dbReference type="GO" id="GO:0006776">
    <property type="term" value="P:vitamin A metabolic process"/>
    <property type="evidence" value="ECO:0000304"/>
    <property type="project" value="ProtInc"/>
</dbReference>
<dbReference type="CDD" id="cd00170">
    <property type="entry name" value="SEC14"/>
    <property type="match status" value="1"/>
</dbReference>
<dbReference type="FunFam" id="1.10.8.20:FF:000004">
    <property type="entry name" value="Retinaldehyde binding protein 1"/>
    <property type="match status" value="1"/>
</dbReference>
<dbReference type="FunFam" id="3.40.525.10:FF:000015">
    <property type="entry name" value="retinaldehyde-binding protein 1"/>
    <property type="match status" value="1"/>
</dbReference>
<dbReference type="Gene3D" id="3.40.525.10">
    <property type="entry name" value="CRAL-TRIO lipid binding domain"/>
    <property type="match status" value="1"/>
</dbReference>
<dbReference type="Gene3D" id="1.10.8.20">
    <property type="entry name" value="N-terminal domain of phosphatidylinositol transfer protein sec14p"/>
    <property type="match status" value="1"/>
</dbReference>
<dbReference type="InterPro" id="IPR001251">
    <property type="entry name" value="CRAL-TRIO_dom"/>
</dbReference>
<dbReference type="InterPro" id="IPR036865">
    <property type="entry name" value="CRAL-TRIO_dom_sf"/>
</dbReference>
<dbReference type="InterPro" id="IPR011074">
    <property type="entry name" value="CRAL/TRIO_N_dom"/>
</dbReference>
<dbReference type="InterPro" id="IPR036273">
    <property type="entry name" value="CRAL/TRIO_N_dom_sf"/>
</dbReference>
<dbReference type="PANTHER" id="PTHR10174">
    <property type="entry name" value="ALPHA-TOCOPHEROL TRANSFER PROTEIN-RELATED"/>
    <property type="match status" value="1"/>
</dbReference>
<dbReference type="PANTHER" id="PTHR10174:SF200">
    <property type="entry name" value="RETINALDEHYDE-BINDING PROTEIN 1"/>
    <property type="match status" value="1"/>
</dbReference>
<dbReference type="Pfam" id="PF00650">
    <property type="entry name" value="CRAL_TRIO"/>
    <property type="match status" value="1"/>
</dbReference>
<dbReference type="Pfam" id="PF03765">
    <property type="entry name" value="CRAL_TRIO_N"/>
    <property type="match status" value="1"/>
</dbReference>
<dbReference type="PRINTS" id="PR00180">
    <property type="entry name" value="CRETINALDHBP"/>
</dbReference>
<dbReference type="SMART" id="SM01100">
    <property type="entry name" value="CRAL_TRIO_N"/>
    <property type="match status" value="1"/>
</dbReference>
<dbReference type="SMART" id="SM00516">
    <property type="entry name" value="SEC14"/>
    <property type="match status" value="1"/>
</dbReference>
<dbReference type="SUPFAM" id="SSF52087">
    <property type="entry name" value="CRAL/TRIO domain"/>
    <property type="match status" value="1"/>
</dbReference>
<dbReference type="SUPFAM" id="SSF46938">
    <property type="entry name" value="CRAL/TRIO N-terminal domain"/>
    <property type="match status" value="1"/>
</dbReference>
<dbReference type="PROSITE" id="PS50191">
    <property type="entry name" value="CRAL_TRIO"/>
    <property type="match status" value="1"/>
</dbReference>
<name>RLBP1_HUMAN</name>
<gene>
    <name type="primary">RLBP1</name>
    <name type="synonym">CRALBP</name>
</gene>
<organism>
    <name type="scientific">Homo sapiens</name>
    <name type="common">Human</name>
    <dbReference type="NCBI Taxonomy" id="9606"/>
    <lineage>
        <taxon>Eukaryota</taxon>
        <taxon>Metazoa</taxon>
        <taxon>Chordata</taxon>
        <taxon>Craniata</taxon>
        <taxon>Vertebrata</taxon>
        <taxon>Euteleostomi</taxon>
        <taxon>Mammalia</taxon>
        <taxon>Eutheria</taxon>
        <taxon>Euarchontoglires</taxon>
        <taxon>Primates</taxon>
        <taxon>Haplorrhini</taxon>
        <taxon>Catarrhini</taxon>
        <taxon>Hominidae</taxon>
        <taxon>Homo</taxon>
    </lineage>
</organism>
<proteinExistence type="evidence at protein level"/>